<evidence type="ECO:0000255" key="1">
    <source>
        <dbReference type="HAMAP-Rule" id="MF_00071"/>
    </source>
</evidence>
<sequence>MTDVPVSRIRNFSIIAHIDHGKSTLADRLLQITGTVAQREMKEQFLDNMDLERERGITIKLQAARMDYTAKDGQKYVLNLIDTPGHVDFSYEVSRSLAACEGALLVVDASQGVEAQTLANVYLALENNLEIIPVLNKIDLPSAEPERVAAEIEEVVGLDCSEAIRASAKAGIGINDILESIVQLVPPPQDTLEEPFRALIFDSYYDAYRGVIVYFRVMDGRVKKGDKIRFMASGKEFVIDELGILSPQQVQVNELHAGEVGYLAAAIKTVADARVGDTITLTAKPAQEPLPGYTEAKPMVFCGLFPTDADQYADLKDALEKLKLNDAALSYEPETSSAMGFGFRCGFLGLLHMEIVQERLEREYNLDLITTAPSVVYQVTTTDGEIVEVDNPSLLPSPQKREKIEEPYIQVEMITPETYVGALMELCQSRRGVFKDMRYFTKTRTALIYELPLAEVVTDFFDQLKSRSRGYASMEYQLIGYRENELVKLDIMVNGDPVDALAMIVHRDKAYYVGRALTEKLKELIPRHQFKVPIQAAIGSKIIASEHIPALRKDVLAKCYGGDISRKKKLLDKQAKGKKRMKAIGTVDVPQEAFMAVLKLDPQ</sequence>
<feature type="chain" id="PRO_1000075139" description="Elongation factor 4">
    <location>
        <begin position="1"/>
        <end position="603"/>
    </location>
</feature>
<feature type="domain" description="tr-type G">
    <location>
        <begin position="7"/>
        <end position="189"/>
    </location>
</feature>
<feature type="binding site" evidence="1">
    <location>
        <begin position="19"/>
        <end position="24"/>
    </location>
    <ligand>
        <name>GTP</name>
        <dbReference type="ChEBI" id="CHEBI:37565"/>
    </ligand>
</feature>
<feature type="binding site" evidence="1">
    <location>
        <begin position="136"/>
        <end position="139"/>
    </location>
    <ligand>
        <name>GTP</name>
        <dbReference type="ChEBI" id="CHEBI:37565"/>
    </ligand>
</feature>
<organism>
    <name type="scientific">Microcystis aeruginosa (strain NIES-843 / IAM M-2473)</name>
    <dbReference type="NCBI Taxonomy" id="449447"/>
    <lineage>
        <taxon>Bacteria</taxon>
        <taxon>Bacillati</taxon>
        <taxon>Cyanobacteriota</taxon>
        <taxon>Cyanophyceae</taxon>
        <taxon>Oscillatoriophycideae</taxon>
        <taxon>Chroococcales</taxon>
        <taxon>Microcystaceae</taxon>
        <taxon>Microcystis</taxon>
    </lineage>
</organism>
<protein>
    <recommendedName>
        <fullName evidence="1">Elongation factor 4</fullName>
        <shortName evidence="1">EF-4</shortName>
        <ecNumber evidence="1">3.6.5.n1</ecNumber>
    </recommendedName>
    <alternativeName>
        <fullName evidence="1">Ribosomal back-translocase LepA</fullName>
    </alternativeName>
</protein>
<name>LEPA_MICAN</name>
<dbReference type="EC" id="3.6.5.n1" evidence="1"/>
<dbReference type="EMBL" id="AP009552">
    <property type="protein sequence ID" value="BAG03806.1"/>
    <property type="molecule type" value="Genomic_DNA"/>
</dbReference>
<dbReference type="RefSeq" id="WP_002762209.1">
    <property type="nucleotide sequence ID" value="NC_010296.1"/>
</dbReference>
<dbReference type="SMR" id="B0JQT7"/>
<dbReference type="STRING" id="449447.MAE_39840"/>
<dbReference type="PaxDb" id="449447-MAE_39840"/>
<dbReference type="EnsemblBacteria" id="BAG03806">
    <property type="protein sequence ID" value="BAG03806"/>
    <property type="gene ID" value="MAE_39840"/>
</dbReference>
<dbReference type="KEGG" id="mar:MAE_39840"/>
<dbReference type="eggNOG" id="COG0481">
    <property type="taxonomic scope" value="Bacteria"/>
</dbReference>
<dbReference type="HOGENOM" id="CLU_009995_3_3_3"/>
<dbReference type="BioCyc" id="MAER449447:MAE_RS17230-MONOMER"/>
<dbReference type="Proteomes" id="UP000001510">
    <property type="component" value="Chromosome"/>
</dbReference>
<dbReference type="GO" id="GO:0005886">
    <property type="term" value="C:plasma membrane"/>
    <property type="evidence" value="ECO:0007669"/>
    <property type="project" value="UniProtKB-SubCell"/>
</dbReference>
<dbReference type="GO" id="GO:0005525">
    <property type="term" value="F:GTP binding"/>
    <property type="evidence" value="ECO:0007669"/>
    <property type="project" value="UniProtKB-KW"/>
</dbReference>
<dbReference type="GO" id="GO:0003924">
    <property type="term" value="F:GTPase activity"/>
    <property type="evidence" value="ECO:0007669"/>
    <property type="project" value="InterPro"/>
</dbReference>
<dbReference type="GO" id="GO:0043022">
    <property type="term" value="F:ribosome binding"/>
    <property type="evidence" value="ECO:0007669"/>
    <property type="project" value="TreeGrafter"/>
</dbReference>
<dbReference type="GO" id="GO:0045727">
    <property type="term" value="P:positive regulation of translation"/>
    <property type="evidence" value="ECO:0007669"/>
    <property type="project" value="TreeGrafter"/>
</dbReference>
<dbReference type="GO" id="GO:0006412">
    <property type="term" value="P:translation"/>
    <property type="evidence" value="ECO:0007669"/>
    <property type="project" value="UniProtKB-KW"/>
</dbReference>
<dbReference type="CDD" id="cd03699">
    <property type="entry name" value="EF4_II"/>
    <property type="match status" value="1"/>
</dbReference>
<dbReference type="CDD" id="cd16260">
    <property type="entry name" value="EF4_III"/>
    <property type="match status" value="1"/>
</dbReference>
<dbReference type="CDD" id="cd01890">
    <property type="entry name" value="LepA"/>
    <property type="match status" value="1"/>
</dbReference>
<dbReference type="CDD" id="cd03709">
    <property type="entry name" value="lepA_C"/>
    <property type="match status" value="1"/>
</dbReference>
<dbReference type="FunFam" id="3.40.50.300:FF:000078">
    <property type="entry name" value="Elongation factor 4"/>
    <property type="match status" value="1"/>
</dbReference>
<dbReference type="FunFam" id="2.40.30.10:FF:000015">
    <property type="entry name" value="Translation factor GUF1, mitochondrial"/>
    <property type="match status" value="1"/>
</dbReference>
<dbReference type="FunFam" id="3.30.70.240:FF:000007">
    <property type="entry name" value="Translation factor GUF1, mitochondrial"/>
    <property type="match status" value="1"/>
</dbReference>
<dbReference type="FunFam" id="3.30.70.2570:FF:000001">
    <property type="entry name" value="Translation factor GUF1, mitochondrial"/>
    <property type="match status" value="1"/>
</dbReference>
<dbReference type="FunFam" id="3.30.70.870:FF:000004">
    <property type="entry name" value="Translation factor GUF1, mitochondrial"/>
    <property type="match status" value="1"/>
</dbReference>
<dbReference type="Gene3D" id="3.30.70.240">
    <property type="match status" value="1"/>
</dbReference>
<dbReference type="Gene3D" id="3.30.70.2570">
    <property type="entry name" value="Elongation factor 4, C-terminal domain"/>
    <property type="match status" value="1"/>
</dbReference>
<dbReference type="Gene3D" id="3.30.70.870">
    <property type="entry name" value="Elongation Factor G (Translational Gtpase), domain 3"/>
    <property type="match status" value="1"/>
</dbReference>
<dbReference type="Gene3D" id="3.40.50.300">
    <property type="entry name" value="P-loop containing nucleotide triphosphate hydrolases"/>
    <property type="match status" value="1"/>
</dbReference>
<dbReference type="Gene3D" id="2.40.30.10">
    <property type="entry name" value="Translation factors"/>
    <property type="match status" value="1"/>
</dbReference>
<dbReference type="HAMAP" id="MF_03138">
    <property type="entry name" value="GUFP"/>
    <property type="match status" value="1"/>
</dbReference>
<dbReference type="HAMAP" id="MF_00071">
    <property type="entry name" value="LepA"/>
    <property type="match status" value="1"/>
</dbReference>
<dbReference type="InterPro" id="IPR006297">
    <property type="entry name" value="EF-4"/>
</dbReference>
<dbReference type="InterPro" id="IPR035647">
    <property type="entry name" value="EFG_III/V"/>
</dbReference>
<dbReference type="InterPro" id="IPR000640">
    <property type="entry name" value="EFG_V-like"/>
</dbReference>
<dbReference type="InterPro" id="IPR004161">
    <property type="entry name" value="EFTu-like_2"/>
</dbReference>
<dbReference type="InterPro" id="IPR031157">
    <property type="entry name" value="G_TR_CS"/>
</dbReference>
<dbReference type="InterPro" id="IPR027518">
    <property type="entry name" value="GUFP"/>
</dbReference>
<dbReference type="InterPro" id="IPR038363">
    <property type="entry name" value="LepA_C_sf"/>
</dbReference>
<dbReference type="InterPro" id="IPR013842">
    <property type="entry name" value="LepA_CTD"/>
</dbReference>
<dbReference type="InterPro" id="IPR035654">
    <property type="entry name" value="LepA_IV"/>
</dbReference>
<dbReference type="InterPro" id="IPR027417">
    <property type="entry name" value="P-loop_NTPase"/>
</dbReference>
<dbReference type="InterPro" id="IPR005225">
    <property type="entry name" value="Small_GTP-bd"/>
</dbReference>
<dbReference type="InterPro" id="IPR000795">
    <property type="entry name" value="T_Tr_GTP-bd_dom"/>
</dbReference>
<dbReference type="InterPro" id="IPR009000">
    <property type="entry name" value="Transl_B-barrel_sf"/>
</dbReference>
<dbReference type="NCBIfam" id="TIGR01393">
    <property type="entry name" value="lepA"/>
    <property type="match status" value="1"/>
</dbReference>
<dbReference type="NCBIfam" id="TIGR00231">
    <property type="entry name" value="small_GTP"/>
    <property type="match status" value="1"/>
</dbReference>
<dbReference type="PANTHER" id="PTHR43512:SF4">
    <property type="entry name" value="TRANSLATION FACTOR GUF1 HOMOLOG, CHLOROPLASTIC"/>
    <property type="match status" value="1"/>
</dbReference>
<dbReference type="PANTHER" id="PTHR43512">
    <property type="entry name" value="TRANSLATION FACTOR GUF1-RELATED"/>
    <property type="match status" value="1"/>
</dbReference>
<dbReference type="Pfam" id="PF00679">
    <property type="entry name" value="EFG_C"/>
    <property type="match status" value="1"/>
</dbReference>
<dbReference type="Pfam" id="PF00009">
    <property type="entry name" value="GTP_EFTU"/>
    <property type="match status" value="1"/>
</dbReference>
<dbReference type="Pfam" id="PF03144">
    <property type="entry name" value="GTP_EFTU_D2"/>
    <property type="match status" value="1"/>
</dbReference>
<dbReference type="Pfam" id="PF06421">
    <property type="entry name" value="LepA_C"/>
    <property type="match status" value="1"/>
</dbReference>
<dbReference type="PRINTS" id="PR00315">
    <property type="entry name" value="ELONGATNFCT"/>
</dbReference>
<dbReference type="SUPFAM" id="SSF54980">
    <property type="entry name" value="EF-G C-terminal domain-like"/>
    <property type="match status" value="2"/>
</dbReference>
<dbReference type="SUPFAM" id="SSF52540">
    <property type="entry name" value="P-loop containing nucleoside triphosphate hydrolases"/>
    <property type="match status" value="1"/>
</dbReference>
<dbReference type="SUPFAM" id="SSF50447">
    <property type="entry name" value="Translation proteins"/>
    <property type="match status" value="1"/>
</dbReference>
<dbReference type="PROSITE" id="PS00301">
    <property type="entry name" value="G_TR_1"/>
    <property type="match status" value="1"/>
</dbReference>
<dbReference type="PROSITE" id="PS51722">
    <property type="entry name" value="G_TR_2"/>
    <property type="match status" value="1"/>
</dbReference>
<proteinExistence type="inferred from homology"/>
<accession>B0JQT7</accession>
<keyword id="KW-0997">Cell inner membrane</keyword>
<keyword id="KW-1003">Cell membrane</keyword>
<keyword id="KW-0342">GTP-binding</keyword>
<keyword id="KW-0378">Hydrolase</keyword>
<keyword id="KW-0472">Membrane</keyword>
<keyword id="KW-0547">Nucleotide-binding</keyword>
<keyword id="KW-0648">Protein biosynthesis</keyword>
<comment type="function">
    <text evidence="1">Required for accurate and efficient protein synthesis under certain stress conditions. May act as a fidelity factor of the translation reaction, by catalyzing a one-codon backward translocation of tRNAs on improperly translocated ribosomes. Back-translocation proceeds from a post-translocation (POST) complex to a pre-translocation (PRE) complex, thus giving elongation factor G a second chance to translocate the tRNAs correctly. Binds to ribosomes in a GTP-dependent manner.</text>
</comment>
<comment type="catalytic activity">
    <reaction evidence="1">
        <text>GTP + H2O = GDP + phosphate + H(+)</text>
        <dbReference type="Rhea" id="RHEA:19669"/>
        <dbReference type="ChEBI" id="CHEBI:15377"/>
        <dbReference type="ChEBI" id="CHEBI:15378"/>
        <dbReference type="ChEBI" id="CHEBI:37565"/>
        <dbReference type="ChEBI" id="CHEBI:43474"/>
        <dbReference type="ChEBI" id="CHEBI:58189"/>
        <dbReference type="EC" id="3.6.5.n1"/>
    </reaction>
</comment>
<comment type="subcellular location">
    <subcellularLocation>
        <location evidence="1">Cell inner membrane</location>
        <topology evidence="1">Peripheral membrane protein</topology>
        <orientation evidence="1">Cytoplasmic side</orientation>
    </subcellularLocation>
</comment>
<comment type="similarity">
    <text evidence="1">Belongs to the TRAFAC class translation factor GTPase superfamily. Classic translation factor GTPase family. LepA subfamily.</text>
</comment>
<gene>
    <name evidence="1" type="primary">lepA</name>
    <name type="ordered locus">MAE_39840</name>
</gene>
<reference key="1">
    <citation type="journal article" date="2007" name="DNA Res.">
        <title>Complete genomic structure of the bloom-forming toxic cyanobacterium Microcystis aeruginosa NIES-843.</title>
        <authorList>
            <person name="Kaneko T."/>
            <person name="Nakajima N."/>
            <person name="Okamoto S."/>
            <person name="Suzuki I."/>
            <person name="Tanabe Y."/>
            <person name="Tamaoki M."/>
            <person name="Nakamura Y."/>
            <person name="Kasai F."/>
            <person name="Watanabe A."/>
            <person name="Kawashima K."/>
            <person name="Kishida Y."/>
            <person name="Ono A."/>
            <person name="Shimizu Y."/>
            <person name="Takahashi C."/>
            <person name="Minami C."/>
            <person name="Fujishiro T."/>
            <person name="Kohara M."/>
            <person name="Katoh M."/>
            <person name="Nakazaki N."/>
            <person name="Nakayama S."/>
            <person name="Yamada M."/>
            <person name="Tabata S."/>
            <person name="Watanabe M.M."/>
        </authorList>
    </citation>
    <scope>NUCLEOTIDE SEQUENCE [LARGE SCALE GENOMIC DNA]</scope>
    <source>
        <strain>NIES-843 / IAM M-247</strain>
    </source>
</reference>